<reference key="1">
    <citation type="journal article" date="2001" name="Proc. Natl. Acad. Sci. U.S.A.">
        <title>BAALC, the human member of a novel mammalian neuroectoderm gene lineage, is implicated in hematopoiesis and acute leukemia.</title>
        <authorList>
            <person name="Tanner S.M."/>
            <person name="Austin J.L."/>
            <person name="Leone G."/>
            <person name="Rush L.J."/>
            <person name="Plass C."/>
            <person name="Heinonen K."/>
            <person name="Mrozek K."/>
            <person name="Sill H."/>
            <person name="Knuutila S."/>
            <person name="Kolitz J.E."/>
            <person name="Archer K.J."/>
            <person name="Caligiuri M.A."/>
            <person name="Bloomfield C.D."/>
            <person name="de La Chapelle A."/>
        </authorList>
    </citation>
    <scope>NUCLEOTIDE SEQUENCE [MRNA] (ISOFORMS 1 AND 2)</scope>
    <scope>TISSUE SPECIFICITY</scope>
</reference>
<feature type="initiator methionine" description="Removed" evidence="2">
    <location>
        <position position="1"/>
    </location>
</feature>
<feature type="chain" id="PRO_0000248207" description="Brain and acute leukemia cytoplasmic protein">
    <location>
        <begin position="2"/>
        <end position="145"/>
    </location>
</feature>
<feature type="region of interest" description="Interaction with CAMK2A" evidence="2">
    <location>
        <begin position="3"/>
        <end position="35"/>
    </location>
</feature>
<feature type="region of interest" description="Disordered" evidence="3">
    <location>
        <begin position="27"/>
        <end position="120"/>
    </location>
</feature>
<feature type="compositionally biased region" description="Polar residues" evidence="3">
    <location>
        <begin position="83"/>
        <end position="106"/>
    </location>
</feature>
<feature type="compositionally biased region" description="Basic and acidic residues" evidence="3">
    <location>
        <begin position="108"/>
        <end position="119"/>
    </location>
</feature>
<feature type="lipid moiety-binding region" description="N-myristoyl glycine" evidence="2">
    <location>
        <position position="2"/>
    </location>
</feature>
<feature type="lipid moiety-binding region" description="S-palmitoyl cysteine" evidence="2">
    <location>
        <position position="3"/>
    </location>
</feature>
<feature type="splice variant" id="VSP_020207" description="In isoform 2." evidence="5">
    <location>
        <begin position="54"/>
        <end position="144"/>
    </location>
</feature>
<proteinExistence type="evidence at transcript level"/>
<sequence>MGCGGSRADAIEPRYYESWTRETESTWLTYTDSDAPPSNAAPDSGPEAGGLQAGVLEDGVSANGVPRSTAPGGTSNPEKKMSCGTQCPNPQSLGSGPLTQKQNGLRTTEAKRDAKRTSAKEVTINVTESIRQVDRNQRITKKCIN</sequence>
<dbReference type="EMBL" id="AF371322">
    <property type="protein sequence ID" value="AAL50518.1"/>
    <property type="molecule type" value="mRNA"/>
</dbReference>
<dbReference type="EMBL" id="AF371326">
    <property type="protein sequence ID" value="AAL50522.1"/>
    <property type="molecule type" value="mRNA"/>
</dbReference>
<dbReference type="RefSeq" id="NP_001123441.1">
    <molecule id="Q8WNE9-1"/>
    <property type="nucleotide sequence ID" value="NM_001129969.1"/>
</dbReference>
<dbReference type="RefSeq" id="XP_013852016.1">
    <property type="nucleotide sequence ID" value="XM_013996562.1"/>
</dbReference>
<dbReference type="FunCoup" id="Q8WNE9">
    <property type="interactions" value="201"/>
</dbReference>
<dbReference type="STRING" id="9823.ENSSSCP00000006463"/>
<dbReference type="PaxDb" id="9823-ENSSSCP00000006463"/>
<dbReference type="Ensembl" id="ENSSSCT00025084170.1">
    <molecule id="Q8WNE9-1"/>
    <property type="protein sequence ID" value="ENSSSCP00025036622.1"/>
    <property type="gene ID" value="ENSSSCG00025061420.1"/>
</dbReference>
<dbReference type="Ensembl" id="ENSSSCT00045041696.1">
    <molecule id="Q8WNE9-1"/>
    <property type="protein sequence ID" value="ENSSSCP00045028924.1"/>
    <property type="gene ID" value="ENSSSCG00045024476.1"/>
</dbReference>
<dbReference type="Ensembl" id="ENSSSCT00050071788.1">
    <molecule id="Q8WNE9-1"/>
    <property type="protein sequence ID" value="ENSSSCP00050030875.1"/>
    <property type="gene ID" value="ENSSSCG00050052707.1"/>
</dbReference>
<dbReference type="Ensembl" id="ENSSSCT00055001283.1">
    <molecule id="Q8WNE9-1"/>
    <property type="protein sequence ID" value="ENSSSCP00055000950.1"/>
    <property type="gene ID" value="ENSSSCG00055000736.1"/>
</dbReference>
<dbReference type="Ensembl" id="ENSSSCT00090021210">
    <molecule id="Q8WNE9-1"/>
    <property type="protein sequence ID" value="ENSSSCP00090013053"/>
    <property type="gene ID" value="ENSSSCG00090012064"/>
</dbReference>
<dbReference type="Ensembl" id="ENSSSCT00105036067">
    <molecule id="Q8WNE9-1"/>
    <property type="protein sequence ID" value="ENSSSCP00105025085"/>
    <property type="gene ID" value="ENSSSCG00105018810"/>
</dbReference>
<dbReference type="Ensembl" id="ENSSSCT00115034403">
    <molecule id="Q8WNE9-1"/>
    <property type="protein sequence ID" value="ENSSSCP00115032668"/>
    <property type="gene ID" value="ENSSSCG00115019421"/>
</dbReference>
<dbReference type="Ensembl" id="ENSSSCT00130011461">
    <molecule id="Q8WNE9-1"/>
    <property type="protein sequence ID" value="ENSSSCP00130007486"/>
    <property type="gene ID" value="ENSSSCG00130006196"/>
</dbReference>
<dbReference type="GeneID" id="100170128"/>
<dbReference type="KEGG" id="ssc:100170128"/>
<dbReference type="CTD" id="79870"/>
<dbReference type="eggNOG" id="KOG4119">
    <property type="taxonomic scope" value="Eukaryota"/>
</dbReference>
<dbReference type="HOGENOM" id="CLU_201318_0_0_1"/>
<dbReference type="InParanoid" id="Q8WNE9"/>
<dbReference type="OrthoDB" id="9940597at2759"/>
<dbReference type="Proteomes" id="UP000008227">
    <property type="component" value="Unplaced"/>
</dbReference>
<dbReference type="Proteomes" id="UP000314985">
    <property type="component" value="Unplaced"/>
</dbReference>
<dbReference type="Proteomes" id="UP000694570">
    <property type="component" value="Unplaced"/>
</dbReference>
<dbReference type="Proteomes" id="UP000694571">
    <property type="component" value="Unplaced"/>
</dbReference>
<dbReference type="Proteomes" id="UP000694720">
    <property type="component" value="Unplaced"/>
</dbReference>
<dbReference type="Proteomes" id="UP000694722">
    <property type="component" value="Unplaced"/>
</dbReference>
<dbReference type="Proteomes" id="UP000694723">
    <property type="component" value="Unplaced"/>
</dbReference>
<dbReference type="Proteomes" id="UP000694724">
    <property type="component" value="Unplaced"/>
</dbReference>
<dbReference type="Proteomes" id="UP000694725">
    <property type="component" value="Unplaced"/>
</dbReference>
<dbReference type="Proteomes" id="UP000694726">
    <property type="component" value="Unplaced"/>
</dbReference>
<dbReference type="Proteomes" id="UP000694727">
    <property type="component" value="Unplaced"/>
</dbReference>
<dbReference type="Proteomes" id="UP000694728">
    <property type="component" value="Unplaced"/>
</dbReference>
<dbReference type="GO" id="GO:0005737">
    <property type="term" value="C:cytoplasm"/>
    <property type="evidence" value="ECO:0000318"/>
    <property type="project" value="GO_Central"/>
</dbReference>
<dbReference type="GO" id="GO:0045121">
    <property type="term" value="C:membrane raft"/>
    <property type="evidence" value="ECO:0007669"/>
    <property type="project" value="UniProtKB-SubCell"/>
</dbReference>
<dbReference type="GO" id="GO:0043005">
    <property type="term" value="C:neuron projection"/>
    <property type="evidence" value="ECO:0007669"/>
    <property type="project" value="UniProtKB-KW"/>
</dbReference>
<dbReference type="GO" id="GO:0014069">
    <property type="term" value="C:postsynaptic density"/>
    <property type="evidence" value="ECO:0007669"/>
    <property type="project" value="UniProtKB-SubCell"/>
</dbReference>
<dbReference type="InterPro" id="IPR009728">
    <property type="entry name" value="BAALC"/>
</dbReference>
<dbReference type="PANTHER" id="PTHR14731">
    <property type="entry name" value="BRAIN AND ACUTE LEUKEMIA CYTOPLASMIC PROTEIN"/>
    <property type="match status" value="1"/>
</dbReference>
<dbReference type="PANTHER" id="PTHR14731:SF0">
    <property type="entry name" value="BRAIN AND ACUTE LEUKEMIA CYTOPLASMIC PROTEIN"/>
    <property type="match status" value="1"/>
</dbReference>
<dbReference type="Pfam" id="PF06989">
    <property type="entry name" value="BAALC_N"/>
    <property type="match status" value="1"/>
</dbReference>
<gene>
    <name type="primary">BAALC</name>
</gene>
<accession>Q8WNE9</accession>
<accession>Q8WNE8</accession>
<protein>
    <recommendedName>
        <fullName>Brain and acute leukemia cytoplasmic protein</fullName>
    </recommendedName>
</protein>
<organism>
    <name type="scientific">Sus scrofa</name>
    <name type="common">Pig</name>
    <dbReference type="NCBI Taxonomy" id="9823"/>
    <lineage>
        <taxon>Eukaryota</taxon>
        <taxon>Metazoa</taxon>
        <taxon>Chordata</taxon>
        <taxon>Craniata</taxon>
        <taxon>Vertebrata</taxon>
        <taxon>Euteleostomi</taxon>
        <taxon>Mammalia</taxon>
        <taxon>Eutheria</taxon>
        <taxon>Laurasiatheria</taxon>
        <taxon>Artiodactyla</taxon>
        <taxon>Suina</taxon>
        <taxon>Suidae</taxon>
        <taxon>Sus</taxon>
    </lineage>
</organism>
<comment type="function">
    <text evidence="2">May play a synaptic role at the postsynaptic lipid rafts possibly through interaction with CAMK2A.</text>
</comment>
<comment type="subunit">
    <text evidence="2">Interacts with CAMK2A.</text>
</comment>
<comment type="subcellular location">
    <subcellularLocation>
        <location evidence="1">Cytoplasm</location>
    </subcellularLocation>
    <subcellularLocation>
        <location evidence="2">Synapse</location>
        <location evidence="2">Synaptosome</location>
    </subcellularLocation>
    <subcellularLocation>
        <location evidence="2">Membrane raft</location>
    </subcellularLocation>
    <subcellularLocation>
        <location evidence="2">Postsynaptic density</location>
    </subcellularLocation>
    <text evidence="1 2">In neurons, localizes to postsynaptic lipid rafts (By similarity). In myocardial and skeletal muscle cells, localizes to the cytoplasm adjacent to the inner cell membrane, polarized to one end of the myocyte (By similarity).</text>
</comment>
<comment type="alternative products">
    <event type="alternative splicing"/>
    <isoform>
        <id>Q8WNE9-1</id>
        <name>1</name>
        <name>1-6-8</name>
        <sequence type="displayed"/>
    </isoform>
    <isoform>
        <id>Q8WNE9-2</id>
        <name>2</name>
        <name>1-8</name>
        <sequence type="described" ref="VSP_020207"/>
    </isoform>
</comment>
<comment type="tissue specificity">
    <text evidence="4">Expressed in the brain.</text>
</comment>
<comment type="PTM">
    <text evidence="2">Palmitoylation and myristoylation target the protein to the lipid rafts.</text>
</comment>
<keyword id="KW-0025">Alternative splicing</keyword>
<keyword id="KW-0963">Cytoplasm</keyword>
<keyword id="KW-0449">Lipoprotein</keyword>
<keyword id="KW-0472">Membrane</keyword>
<keyword id="KW-0519">Myristate</keyword>
<keyword id="KW-0564">Palmitate</keyword>
<keyword id="KW-1185">Reference proteome</keyword>
<keyword id="KW-0770">Synapse</keyword>
<keyword id="KW-0771">Synaptosome</keyword>
<name>BAALC_PIG</name>
<evidence type="ECO:0000250" key="1">
    <source>
        <dbReference type="UniProtKB" id="Q8VHV1"/>
    </source>
</evidence>
<evidence type="ECO:0000250" key="2">
    <source>
        <dbReference type="UniProtKB" id="Q920K5"/>
    </source>
</evidence>
<evidence type="ECO:0000256" key="3">
    <source>
        <dbReference type="SAM" id="MobiDB-lite"/>
    </source>
</evidence>
<evidence type="ECO:0000269" key="4">
    <source>
    </source>
</evidence>
<evidence type="ECO:0000303" key="5">
    <source>
    </source>
</evidence>